<proteinExistence type="inferred from homology"/>
<accession>Q5NQ58</accession>
<protein>
    <recommendedName>
        <fullName evidence="1">Large ribosomal subunit protein uL16</fullName>
    </recommendedName>
    <alternativeName>
        <fullName evidence="3">50S ribosomal protein L16</fullName>
    </alternativeName>
</protein>
<keyword id="KW-1185">Reference proteome</keyword>
<keyword id="KW-0687">Ribonucleoprotein</keyword>
<keyword id="KW-0689">Ribosomal protein</keyword>
<keyword id="KW-0694">RNA-binding</keyword>
<keyword id="KW-0699">rRNA-binding</keyword>
<keyword id="KW-0820">tRNA-binding</keyword>
<comment type="function">
    <text evidence="1">Binds 23S rRNA and is also seen to make contacts with the A and possibly P site tRNAs.</text>
</comment>
<comment type="subunit">
    <text evidence="1">Part of the 50S ribosomal subunit.</text>
</comment>
<comment type="similarity">
    <text evidence="1">Belongs to the universal ribosomal protein uL16 family.</text>
</comment>
<sequence length="143" mass="15888">MLQPKRTKFRKAHKGRIHGNAPGGATLNFGAYGLKAMEPDRITARQIEAARRAITRHIRRQGRLWIRIFPDVPVSSKPAEVRMGSGKGSPEFWVARVKPGRILFELDGVPGPIARVAFERAAAKLPIKVKVVARLGETIYEEA</sequence>
<evidence type="ECO:0000255" key="1">
    <source>
        <dbReference type="HAMAP-Rule" id="MF_01342"/>
    </source>
</evidence>
<evidence type="ECO:0000256" key="2">
    <source>
        <dbReference type="SAM" id="MobiDB-lite"/>
    </source>
</evidence>
<evidence type="ECO:0000305" key="3"/>
<name>RL16_ZYMMO</name>
<reference key="1">
    <citation type="journal article" date="2005" name="Nat. Biotechnol.">
        <title>The genome sequence of the ethanologenic bacterium Zymomonas mobilis ZM4.</title>
        <authorList>
            <person name="Seo J.-S."/>
            <person name="Chong H."/>
            <person name="Park H.S."/>
            <person name="Yoon K.-O."/>
            <person name="Jung C."/>
            <person name="Kim J.J."/>
            <person name="Hong J.H."/>
            <person name="Kim H."/>
            <person name="Kim J.-H."/>
            <person name="Kil J.-I."/>
            <person name="Park C.J."/>
            <person name="Oh H.-M."/>
            <person name="Lee J.-S."/>
            <person name="Jin S.-J."/>
            <person name="Um H.-W."/>
            <person name="Lee H.-J."/>
            <person name="Oh S.-J."/>
            <person name="Kim J.Y."/>
            <person name="Kang H.L."/>
            <person name="Lee S.Y."/>
            <person name="Lee K.J."/>
            <person name="Kang H.S."/>
        </authorList>
    </citation>
    <scope>NUCLEOTIDE SEQUENCE [LARGE SCALE GENOMIC DNA]</scope>
    <source>
        <strain>ATCC 31821 / ZM4 / CP4</strain>
    </source>
</reference>
<organism>
    <name type="scientific">Zymomonas mobilis subsp. mobilis (strain ATCC 31821 / ZM4 / CP4)</name>
    <dbReference type="NCBI Taxonomy" id="264203"/>
    <lineage>
        <taxon>Bacteria</taxon>
        <taxon>Pseudomonadati</taxon>
        <taxon>Pseudomonadota</taxon>
        <taxon>Alphaproteobacteria</taxon>
        <taxon>Sphingomonadales</taxon>
        <taxon>Zymomonadaceae</taxon>
        <taxon>Zymomonas</taxon>
    </lineage>
</organism>
<dbReference type="EMBL" id="AE008692">
    <property type="protein sequence ID" value="AAV89147.1"/>
    <property type="molecule type" value="Genomic_DNA"/>
</dbReference>
<dbReference type="RefSeq" id="WP_011240430.1">
    <property type="nucleotide sequence ID" value="NZ_CP035711.1"/>
</dbReference>
<dbReference type="SMR" id="Q5NQ58"/>
<dbReference type="STRING" id="264203.ZMO0523"/>
<dbReference type="GeneID" id="79904285"/>
<dbReference type="KEGG" id="zmo:ZMO0523"/>
<dbReference type="eggNOG" id="COG0197">
    <property type="taxonomic scope" value="Bacteria"/>
</dbReference>
<dbReference type="HOGENOM" id="CLU_078858_2_1_5"/>
<dbReference type="Proteomes" id="UP000001173">
    <property type="component" value="Chromosome"/>
</dbReference>
<dbReference type="GO" id="GO:0022625">
    <property type="term" value="C:cytosolic large ribosomal subunit"/>
    <property type="evidence" value="ECO:0007669"/>
    <property type="project" value="TreeGrafter"/>
</dbReference>
<dbReference type="GO" id="GO:0019843">
    <property type="term" value="F:rRNA binding"/>
    <property type="evidence" value="ECO:0007669"/>
    <property type="project" value="UniProtKB-UniRule"/>
</dbReference>
<dbReference type="GO" id="GO:0003735">
    <property type="term" value="F:structural constituent of ribosome"/>
    <property type="evidence" value="ECO:0007669"/>
    <property type="project" value="InterPro"/>
</dbReference>
<dbReference type="GO" id="GO:0000049">
    <property type="term" value="F:tRNA binding"/>
    <property type="evidence" value="ECO:0007669"/>
    <property type="project" value="UniProtKB-KW"/>
</dbReference>
<dbReference type="GO" id="GO:0006412">
    <property type="term" value="P:translation"/>
    <property type="evidence" value="ECO:0007669"/>
    <property type="project" value="UniProtKB-UniRule"/>
</dbReference>
<dbReference type="CDD" id="cd01433">
    <property type="entry name" value="Ribosomal_L16_L10e"/>
    <property type="match status" value="1"/>
</dbReference>
<dbReference type="FunFam" id="3.90.1170.10:FF:000001">
    <property type="entry name" value="50S ribosomal protein L16"/>
    <property type="match status" value="1"/>
</dbReference>
<dbReference type="Gene3D" id="3.90.1170.10">
    <property type="entry name" value="Ribosomal protein L10e/L16"/>
    <property type="match status" value="1"/>
</dbReference>
<dbReference type="HAMAP" id="MF_01342">
    <property type="entry name" value="Ribosomal_uL16"/>
    <property type="match status" value="1"/>
</dbReference>
<dbReference type="InterPro" id="IPR047873">
    <property type="entry name" value="Ribosomal_uL16"/>
</dbReference>
<dbReference type="InterPro" id="IPR000114">
    <property type="entry name" value="Ribosomal_uL16_bact-type"/>
</dbReference>
<dbReference type="InterPro" id="IPR020798">
    <property type="entry name" value="Ribosomal_uL16_CS"/>
</dbReference>
<dbReference type="InterPro" id="IPR016180">
    <property type="entry name" value="Ribosomal_uL16_dom"/>
</dbReference>
<dbReference type="InterPro" id="IPR036920">
    <property type="entry name" value="Ribosomal_uL16_sf"/>
</dbReference>
<dbReference type="NCBIfam" id="TIGR01164">
    <property type="entry name" value="rplP_bact"/>
    <property type="match status" value="1"/>
</dbReference>
<dbReference type="PANTHER" id="PTHR12220">
    <property type="entry name" value="50S/60S RIBOSOMAL PROTEIN L16"/>
    <property type="match status" value="1"/>
</dbReference>
<dbReference type="PANTHER" id="PTHR12220:SF13">
    <property type="entry name" value="LARGE RIBOSOMAL SUBUNIT PROTEIN UL16M"/>
    <property type="match status" value="1"/>
</dbReference>
<dbReference type="Pfam" id="PF00252">
    <property type="entry name" value="Ribosomal_L16"/>
    <property type="match status" value="1"/>
</dbReference>
<dbReference type="PRINTS" id="PR00060">
    <property type="entry name" value="RIBOSOMALL16"/>
</dbReference>
<dbReference type="SUPFAM" id="SSF54686">
    <property type="entry name" value="Ribosomal protein L16p/L10e"/>
    <property type="match status" value="1"/>
</dbReference>
<dbReference type="PROSITE" id="PS00586">
    <property type="entry name" value="RIBOSOMAL_L16_1"/>
    <property type="match status" value="1"/>
</dbReference>
<dbReference type="PROSITE" id="PS00701">
    <property type="entry name" value="RIBOSOMAL_L16_2"/>
    <property type="match status" value="1"/>
</dbReference>
<gene>
    <name evidence="1" type="primary">rplP</name>
    <name type="ordered locus">ZMO0523</name>
</gene>
<feature type="chain" id="PRO_0000062262" description="Large ribosomal subunit protein uL16">
    <location>
        <begin position="1"/>
        <end position="143"/>
    </location>
</feature>
<feature type="region of interest" description="Disordered" evidence="2">
    <location>
        <begin position="1"/>
        <end position="20"/>
    </location>
</feature>
<feature type="compositionally biased region" description="Basic residues" evidence="2">
    <location>
        <begin position="1"/>
        <end position="17"/>
    </location>
</feature>